<sequence length="130" mass="14051">MSMQDPIADMLTRIRNGQAANKVAVTMPSSKLKVAIANVLKEEGFIEDFKIEGGTKPVLELVLKYFQGNAVVESIQRISRPGLRIYKKKDELPKVMAGLGIAVVSTSKGVMTDRAARQAGLGGEIICYVA</sequence>
<gene>
    <name evidence="1" type="primary">rpsH</name>
</gene>
<dbReference type="EMBL" id="D31786">
    <property type="protein sequence ID" value="BAA06589.1"/>
    <property type="molecule type" value="Genomic_DNA"/>
</dbReference>
<dbReference type="SMR" id="P46180"/>
<dbReference type="GO" id="GO:1990904">
    <property type="term" value="C:ribonucleoprotein complex"/>
    <property type="evidence" value="ECO:0007669"/>
    <property type="project" value="UniProtKB-KW"/>
</dbReference>
<dbReference type="GO" id="GO:0005840">
    <property type="term" value="C:ribosome"/>
    <property type="evidence" value="ECO:0007669"/>
    <property type="project" value="UniProtKB-KW"/>
</dbReference>
<dbReference type="GO" id="GO:0019843">
    <property type="term" value="F:rRNA binding"/>
    <property type="evidence" value="ECO:0007669"/>
    <property type="project" value="UniProtKB-UniRule"/>
</dbReference>
<dbReference type="GO" id="GO:0003735">
    <property type="term" value="F:structural constituent of ribosome"/>
    <property type="evidence" value="ECO:0007669"/>
    <property type="project" value="InterPro"/>
</dbReference>
<dbReference type="GO" id="GO:0006412">
    <property type="term" value="P:translation"/>
    <property type="evidence" value="ECO:0007669"/>
    <property type="project" value="UniProtKB-UniRule"/>
</dbReference>
<dbReference type="FunFam" id="3.30.1370.30:FF:000003">
    <property type="entry name" value="30S ribosomal protein S8"/>
    <property type="match status" value="1"/>
</dbReference>
<dbReference type="FunFam" id="3.30.1490.10:FF:000001">
    <property type="entry name" value="30S ribosomal protein S8"/>
    <property type="match status" value="1"/>
</dbReference>
<dbReference type="Gene3D" id="3.30.1370.30">
    <property type="match status" value="1"/>
</dbReference>
<dbReference type="Gene3D" id="3.30.1490.10">
    <property type="match status" value="1"/>
</dbReference>
<dbReference type="HAMAP" id="MF_01302_B">
    <property type="entry name" value="Ribosomal_uS8_B"/>
    <property type="match status" value="1"/>
</dbReference>
<dbReference type="InterPro" id="IPR000630">
    <property type="entry name" value="Ribosomal_uS8"/>
</dbReference>
<dbReference type="InterPro" id="IPR047863">
    <property type="entry name" value="Ribosomal_uS8_CS"/>
</dbReference>
<dbReference type="InterPro" id="IPR035987">
    <property type="entry name" value="Ribosomal_uS8_sf"/>
</dbReference>
<dbReference type="NCBIfam" id="NF001109">
    <property type="entry name" value="PRK00136.1"/>
    <property type="match status" value="1"/>
</dbReference>
<dbReference type="PANTHER" id="PTHR11758">
    <property type="entry name" value="40S RIBOSOMAL PROTEIN S15A"/>
    <property type="match status" value="1"/>
</dbReference>
<dbReference type="Pfam" id="PF00410">
    <property type="entry name" value="Ribosomal_S8"/>
    <property type="match status" value="1"/>
</dbReference>
<dbReference type="SUPFAM" id="SSF56047">
    <property type="entry name" value="Ribosomal protein S8"/>
    <property type="match status" value="1"/>
</dbReference>
<dbReference type="PROSITE" id="PS00053">
    <property type="entry name" value="RIBOSOMAL_S8"/>
    <property type="match status" value="1"/>
</dbReference>
<keyword id="KW-0687">Ribonucleoprotein</keyword>
<keyword id="KW-0689">Ribosomal protein</keyword>
<keyword id="KW-0694">RNA-binding</keyword>
<keyword id="KW-0699">rRNA-binding</keyword>
<evidence type="ECO:0000255" key="1">
    <source>
        <dbReference type="HAMAP-Rule" id="MF_01302"/>
    </source>
</evidence>
<evidence type="ECO:0000305" key="2"/>
<name>RS8_BUCAK</name>
<organism>
    <name type="scientific">Buchnera aphidicola subsp. Acyrthosiphon kondoi</name>
    <name type="common">Acyrthosiphon kondoi symbiotic bacterium</name>
    <dbReference type="NCBI Taxonomy" id="42474"/>
    <lineage>
        <taxon>Bacteria</taxon>
        <taxon>Pseudomonadati</taxon>
        <taxon>Pseudomonadota</taxon>
        <taxon>Gammaproteobacteria</taxon>
        <taxon>Enterobacterales</taxon>
        <taxon>Erwiniaceae</taxon>
        <taxon>Buchnera</taxon>
    </lineage>
</organism>
<feature type="chain" id="PRO_0000126381" description="Small ribosomal subunit protein uS8">
    <location>
        <begin position="1"/>
        <end position="130"/>
    </location>
</feature>
<accession>P46180</accession>
<proteinExistence type="inferred from homology"/>
<reference key="1">
    <citation type="journal article" date="1994" name="DNA Res.">
        <title>Cloning and characterization of the ribosomal protein genes in the spc operon of a prokaryotic endosymbiont of the pea aphid, Acyrthosiphon kondoi.</title>
        <authorList>
            <person name="Abe R."/>
            <person name="Yamashita A."/>
            <person name="Isono K."/>
        </authorList>
    </citation>
    <scope>NUCLEOTIDE SEQUENCE [GENOMIC DNA]</scope>
    <source>
        <strain>Kurashiki</strain>
    </source>
</reference>
<protein>
    <recommendedName>
        <fullName evidence="1">Small ribosomal subunit protein uS8</fullName>
    </recommendedName>
    <alternativeName>
        <fullName evidence="2">30S ribosomal protein S8</fullName>
    </alternativeName>
</protein>
<comment type="function">
    <text evidence="1">One of the primary rRNA binding proteins, it binds directly to 16S rRNA central domain where it helps coordinate assembly of the platform of the 30S subunit.</text>
</comment>
<comment type="subunit">
    <text evidence="1">Part of the 30S ribosomal subunit. Contacts proteins S5 and S12.</text>
</comment>
<comment type="similarity">
    <text evidence="1">Belongs to the universal ribosomal protein uS8 family.</text>
</comment>